<comment type="function">
    <text evidence="1">Catalyzes the ATP-dependent 2-thiolation of cytidine in position 32 of tRNA, to form 2-thiocytidine (s(2)C32). The sulfur atoms are provided by the cysteine/cysteine desulfurase (IscS) system.</text>
</comment>
<comment type="catalytic activity">
    <reaction evidence="1">
        <text>cytidine(32) in tRNA + S-sulfanyl-L-cysteinyl-[cysteine desulfurase] + AH2 + ATP = 2-thiocytidine(32) in tRNA + L-cysteinyl-[cysteine desulfurase] + A + AMP + diphosphate + H(+)</text>
        <dbReference type="Rhea" id="RHEA:57048"/>
        <dbReference type="Rhea" id="RHEA-COMP:10288"/>
        <dbReference type="Rhea" id="RHEA-COMP:12157"/>
        <dbReference type="Rhea" id="RHEA-COMP:12158"/>
        <dbReference type="Rhea" id="RHEA-COMP:14821"/>
        <dbReference type="ChEBI" id="CHEBI:13193"/>
        <dbReference type="ChEBI" id="CHEBI:15378"/>
        <dbReference type="ChEBI" id="CHEBI:17499"/>
        <dbReference type="ChEBI" id="CHEBI:29950"/>
        <dbReference type="ChEBI" id="CHEBI:30616"/>
        <dbReference type="ChEBI" id="CHEBI:33019"/>
        <dbReference type="ChEBI" id="CHEBI:61963"/>
        <dbReference type="ChEBI" id="CHEBI:82748"/>
        <dbReference type="ChEBI" id="CHEBI:141453"/>
        <dbReference type="ChEBI" id="CHEBI:456215"/>
    </reaction>
    <physiologicalReaction direction="left-to-right" evidence="1">
        <dbReference type="Rhea" id="RHEA:57049"/>
    </physiologicalReaction>
</comment>
<comment type="cofactor">
    <cofactor evidence="1">
        <name>Mg(2+)</name>
        <dbReference type="ChEBI" id="CHEBI:18420"/>
    </cofactor>
</comment>
<comment type="cofactor">
    <cofactor evidence="1">
        <name>[4Fe-4S] cluster</name>
        <dbReference type="ChEBI" id="CHEBI:49883"/>
    </cofactor>
    <text evidence="1">Binds 1 [4Fe-4S] cluster per subunit. The cluster is chelated by three Cys residues, the fourth Fe has a free coordination site that may bind a sulfur atom transferred from the persulfide of IscS.</text>
</comment>
<comment type="pathway">
    <text evidence="1">tRNA modification.</text>
</comment>
<comment type="subunit">
    <text evidence="1">Homodimer.</text>
</comment>
<comment type="subcellular location">
    <subcellularLocation>
        <location evidence="1">Cytoplasm</location>
    </subcellularLocation>
</comment>
<comment type="miscellaneous">
    <text evidence="1">The thiolation reaction likely consists of two steps: a first activation step by ATP to form an adenylated intermediate of the target base of tRNA, and a second nucleophilic substitution step of the sulfur (S) atom supplied by the hydrosulfide attached to the Fe-S cluster.</text>
</comment>
<comment type="similarity">
    <text evidence="1">Belongs to the TtcA family.</text>
</comment>
<keyword id="KW-0004">4Fe-4S</keyword>
<keyword id="KW-0067">ATP-binding</keyword>
<keyword id="KW-0963">Cytoplasm</keyword>
<keyword id="KW-0408">Iron</keyword>
<keyword id="KW-0411">Iron-sulfur</keyword>
<keyword id="KW-0460">Magnesium</keyword>
<keyword id="KW-0479">Metal-binding</keyword>
<keyword id="KW-0547">Nucleotide-binding</keyword>
<keyword id="KW-1185">Reference proteome</keyword>
<keyword id="KW-0694">RNA-binding</keyword>
<keyword id="KW-0808">Transferase</keyword>
<keyword id="KW-0819">tRNA processing</keyword>
<keyword id="KW-0820">tRNA-binding</keyword>
<dbReference type="EC" id="2.8.1.-" evidence="1"/>
<dbReference type="EMBL" id="CP000462">
    <property type="protein sequence ID" value="ABK38261.1"/>
    <property type="molecule type" value="Genomic_DNA"/>
</dbReference>
<dbReference type="RefSeq" id="WP_011706151.1">
    <property type="nucleotide sequence ID" value="NC_008570.1"/>
</dbReference>
<dbReference type="RefSeq" id="YP_856828.1">
    <property type="nucleotide sequence ID" value="NC_008570.1"/>
</dbReference>
<dbReference type="SMR" id="A0KKM7"/>
<dbReference type="STRING" id="380703.AHA_2305"/>
<dbReference type="EnsemblBacteria" id="ABK38261">
    <property type="protein sequence ID" value="ABK38261"/>
    <property type="gene ID" value="AHA_2305"/>
</dbReference>
<dbReference type="GeneID" id="4490742"/>
<dbReference type="KEGG" id="aha:AHA_2305"/>
<dbReference type="PATRIC" id="fig|380703.7.peg.2306"/>
<dbReference type="eggNOG" id="COG0037">
    <property type="taxonomic scope" value="Bacteria"/>
</dbReference>
<dbReference type="HOGENOM" id="CLU_026481_0_0_6"/>
<dbReference type="OrthoDB" id="9801054at2"/>
<dbReference type="Proteomes" id="UP000000756">
    <property type="component" value="Chromosome"/>
</dbReference>
<dbReference type="GO" id="GO:0005737">
    <property type="term" value="C:cytoplasm"/>
    <property type="evidence" value="ECO:0007669"/>
    <property type="project" value="UniProtKB-SubCell"/>
</dbReference>
<dbReference type="GO" id="GO:0051539">
    <property type="term" value="F:4 iron, 4 sulfur cluster binding"/>
    <property type="evidence" value="ECO:0007669"/>
    <property type="project" value="UniProtKB-UniRule"/>
</dbReference>
<dbReference type="GO" id="GO:0005524">
    <property type="term" value="F:ATP binding"/>
    <property type="evidence" value="ECO:0007669"/>
    <property type="project" value="UniProtKB-UniRule"/>
</dbReference>
<dbReference type="GO" id="GO:0000287">
    <property type="term" value="F:magnesium ion binding"/>
    <property type="evidence" value="ECO:0007669"/>
    <property type="project" value="UniProtKB-UniRule"/>
</dbReference>
<dbReference type="GO" id="GO:0016783">
    <property type="term" value="F:sulfurtransferase activity"/>
    <property type="evidence" value="ECO:0007669"/>
    <property type="project" value="UniProtKB-UniRule"/>
</dbReference>
<dbReference type="GO" id="GO:0000049">
    <property type="term" value="F:tRNA binding"/>
    <property type="evidence" value="ECO:0007669"/>
    <property type="project" value="UniProtKB-KW"/>
</dbReference>
<dbReference type="GO" id="GO:0034227">
    <property type="term" value="P:tRNA thio-modification"/>
    <property type="evidence" value="ECO:0007669"/>
    <property type="project" value="UniProtKB-UniRule"/>
</dbReference>
<dbReference type="CDD" id="cd24138">
    <property type="entry name" value="TtcA-like"/>
    <property type="match status" value="1"/>
</dbReference>
<dbReference type="Gene3D" id="3.40.50.620">
    <property type="entry name" value="HUPs"/>
    <property type="match status" value="1"/>
</dbReference>
<dbReference type="HAMAP" id="MF_01850">
    <property type="entry name" value="TtcA"/>
    <property type="match status" value="1"/>
</dbReference>
<dbReference type="InterPro" id="IPR014729">
    <property type="entry name" value="Rossmann-like_a/b/a_fold"/>
</dbReference>
<dbReference type="InterPro" id="IPR011063">
    <property type="entry name" value="TilS/TtcA_N"/>
</dbReference>
<dbReference type="InterPro" id="IPR012089">
    <property type="entry name" value="tRNA_Cyd_32_2_STrfase"/>
</dbReference>
<dbReference type="InterPro" id="IPR035107">
    <property type="entry name" value="tRNA_thiolation_TtcA_Ctu1"/>
</dbReference>
<dbReference type="NCBIfam" id="NF007972">
    <property type="entry name" value="PRK10696.1"/>
    <property type="match status" value="1"/>
</dbReference>
<dbReference type="PANTHER" id="PTHR43686:SF1">
    <property type="entry name" value="AMINOTRAN_5 DOMAIN-CONTAINING PROTEIN"/>
    <property type="match status" value="1"/>
</dbReference>
<dbReference type="PANTHER" id="PTHR43686">
    <property type="entry name" value="SULFURTRANSFERASE-RELATED"/>
    <property type="match status" value="1"/>
</dbReference>
<dbReference type="Pfam" id="PF01171">
    <property type="entry name" value="ATP_bind_3"/>
    <property type="match status" value="1"/>
</dbReference>
<dbReference type="PIRSF" id="PIRSF004976">
    <property type="entry name" value="ATPase_YdaO"/>
    <property type="match status" value="1"/>
</dbReference>
<dbReference type="SUPFAM" id="SSF52402">
    <property type="entry name" value="Adenine nucleotide alpha hydrolases-like"/>
    <property type="match status" value="1"/>
</dbReference>
<organism>
    <name type="scientific">Aeromonas hydrophila subsp. hydrophila (strain ATCC 7966 / DSM 30187 / BCRC 13018 / CCUG 14551 / JCM 1027 / KCTC 2358 / NCIMB 9240 / NCTC 8049)</name>
    <dbReference type="NCBI Taxonomy" id="380703"/>
    <lineage>
        <taxon>Bacteria</taxon>
        <taxon>Pseudomonadati</taxon>
        <taxon>Pseudomonadota</taxon>
        <taxon>Gammaproteobacteria</taxon>
        <taxon>Aeromonadales</taxon>
        <taxon>Aeromonadaceae</taxon>
        <taxon>Aeromonas</taxon>
    </lineage>
</organism>
<gene>
    <name evidence="1" type="primary">ttcA</name>
    <name type="ordered locus">AHA_2305</name>
</gene>
<name>TTCA_AERHH</name>
<feature type="chain" id="PRO_0000348654" description="tRNA-cytidine(32) 2-sulfurtransferase">
    <location>
        <begin position="1"/>
        <end position="302"/>
    </location>
</feature>
<feature type="short sequence motif" description="PP-loop motif" evidence="1">
    <location>
        <begin position="45"/>
        <end position="50"/>
    </location>
</feature>
<feature type="binding site" evidence="1">
    <location>
        <position position="120"/>
    </location>
    <ligand>
        <name>[4Fe-4S] cluster</name>
        <dbReference type="ChEBI" id="CHEBI:49883"/>
    </ligand>
</feature>
<feature type="binding site" evidence="1">
    <location>
        <position position="123"/>
    </location>
    <ligand>
        <name>[4Fe-4S] cluster</name>
        <dbReference type="ChEBI" id="CHEBI:49883"/>
    </ligand>
</feature>
<feature type="binding site" evidence="1">
    <location>
        <position position="211"/>
    </location>
    <ligand>
        <name>[4Fe-4S] cluster</name>
        <dbReference type="ChEBI" id="CHEBI:49883"/>
    </ligand>
</feature>
<reference key="1">
    <citation type="journal article" date="2006" name="J. Bacteriol.">
        <title>Genome sequence of Aeromonas hydrophila ATCC 7966T: jack of all trades.</title>
        <authorList>
            <person name="Seshadri R."/>
            <person name="Joseph S.W."/>
            <person name="Chopra A.K."/>
            <person name="Sha J."/>
            <person name="Shaw J."/>
            <person name="Graf J."/>
            <person name="Haft D.H."/>
            <person name="Wu M."/>
            <person name="Ren Q."/>
            <person name="Rosovitz M.J."/>
            <person name="Madupu R."/>
            <person name="Tallon L."/>
            <person name="Kim M."/>
            <person name="Jin S."/>
            <person name="Vuong H."/>
            <person name="Stine O.C."/>
            <person name="Ali A."/>
            <person name="Horneman A.J."/>
            <person name="Heidelberg J.F."/>
        </authorList>
    </citation>
    <scope>NUCLEOTIDE SEQUENCE [LARGE SCALE GENOMIC DNA]</scope>
    <source>
        <strain>ATCC 7966 / DSM 30187 / BCRC 13018 / CCUG 14551 / JCM 1027 / KCTC 2358 / NCIMB 9240 / NCTC 8049</strain>
    </source>
</reference>
<evidence type="ECO:0000255" key="1">
    <source>
        <dbReference type="HAMAP-Rule" id="MF_01850"/>
    </source>
</evidence>
<protein>
    <recommendedName>
        <fullName evidence="1">tRNA-cytidine(32) 2-sulfurtransferase</fullName>
        <ecNumber evidence="1">2.8.1.-</ecNumber>
    </recommendedName>
    <alternativeName>
        <fullName evidence="1">Two-thiocytidine biosynthesis protein A</fullName>
    </alternativeName>
    <alternativeName>
        <fullName evidence="1">tRNA 2-thiocytidine biosynthesis protein TtcA</fullName>
    </alternativeName>
</protein>
<sequence length="302" mass="34307">MLEELNAKEKYSFNKLQKRLRRNVGQAIADFNMIEEGDKVMVCLSGGKDSFAMLDILMSLKASAPIHFDLVAVNLDQKQPGFPEHVLPEYLTTLGIDFKIVEEDTYAIVKEKVPEGKTTCALCSRLRRGILYRTAQELGCTKIALGHHRDDILETLFLNMFYGGKLKSMPPKLVSDDGKNVVIRPLAYCKEKDLVRYAEVKAFPIIPCNLCGSQENLQRQAIKQMMQEWDRRFPGRLETMFTAIQDVIPSHLLDHKLFDFKSINRDSGIIDGGDKAFDPPELPKAPLLDIDEMDMLDVIEVR</sequence>
<accession>A0KKM7</accession>
<proteinExistence type="inferred from homology"/>